<organism>
    <name type="scientific">Deinococcus deserti (strain DSM 17065 / CIP 109153 / LMG 22923 / VCD115)</name>
    <dbReference type="NCBI Taxonomy" id="546414"/>
    <lineage>
        <taxon>Bacteria</taxon>
        <taxon>Thermotogati</taxon>
        <taxon>Deinococcota</taxon>
        <taxon>Deinococci</taxon>
        <taxon>Deinococcales</taxon>
        <taxon>Deinococcaceae</taxon>
        <taxon>Deinococcus</taxon>
    </lineage>
</organism>
<gene>
    <name evidence="1" type="primary">hutI</name>
    <name type="ordered locus">Deide_15230</name>
</gene>
<proteinExistence type="inferred from homology"/>
<name>HUTI_DEIDV</name>
<reference key="1">
    <citation type="journal article" date="2009" name="PLoS Genet.">
        <title>Alliance of proteomics and genomics to unravel the specificities of Sahara bacterium Deinococcus deserti.</title>
        <authorList>
            <person name="de Groot A."/>
            <person name="Dulermo R."/>
            <person name="Ortet P."/>
            <person name="Blanchard L."/>
            <person name="Guerin P."/>
            <person name="Fernandez B."/>
            <person name="Vacherie B."/>
            <person name="Dossat C."/>
            <person name="Jolivet E."/>
            <person name="Siguier P."/>
            <person name="Chandler M."/>
            <person name="Barakat M."/>
            <person name="Dedieu A."/>
            <person name="Barbe V."/>
            <person name="Heulin T."/>
            <person name="Sommer S."/>
            <person name="Achouak W."/>
            <person name="Armengaud J."/>
        </authorList>
    </citation>
    <scope>NUCLEOTIDE SEQUENCE [LARGE SCALE GENOMIC DNA]</scope>
    <source>
        <strain>DSM 17065 / CIP 109153 / LMG 22923 / VCD115</strain>
    </source>
</reference>
<accession>C1CWB5</accession>
<keyword id="KW-0963">Cytoplasm</keyword>
<keyword id="KW-0369">Histidine metabolism</keyword>
<keyword id="KW-0378">Hydrolase</keyword>
<keyword id="KW-0408">Iron</keyword>
<keyword id="KW-0479">Metal-binding</keyword>
<keyword id="KW-1185">Reference proteome</keyword>
<keyword id="KW-0862">Zinc</keyword>
<protein>
    <recommendedName>
        <fullName evidence="1">Imidazolonepropionase</fullName>
        <ecNumber evidence="1">3.5.2.7</ecNumber>
    </recommendedName>
    <alternativeName>
        <fullName evidence="1">Imidazolone-5-propionate hydrolase</fullName>
    </alternativeName>
</protein>
<sequence length="399" mass="41880">MNETLFTGISQLVTPAPGVQRGAAMRELTRLDDAAMLVRDGVIAWTGSRQQAPASTSIHDLGGVAVVPGLVDPHTHSVWAGDRLADFEARISGVPYEEILARGGGIRSTMRATAASSVEALVALARPRLEALRDSGATTVEVKSGYGLDFAAERRMLQAVQILQAEFQLIPTLLIHVPPQDHRAAYVQGVCEDLIPWVAAEHLATAVDVFCEKEAFSVEETRQILAAAQQHGLQVKVHADQFQAIGGTELACQLGALSVDHLEASGQAQIEALAASDTVATILPGVTLHLGLPAAPGRRLIDAGAAVAVGTDLNPGSSPVFSSQLVLALAVRLCGLTPPEALSACTVNAAHALGLRDRGALAPGQRADFLALHSSDWRDLAYTLGASPVRDVWQAGTRV</sequence>
<feature type="chain" id="PRO_1000205582" description="Imidazolonepropionase">
    <location>
        <begin position="1"/>
        <end position="399"/>
    </location>
</feature>
<feature type="binding site" evidence="1">
    <location>
        <position position="74"/>
    </location>
    <ligand>
        <name>Fe(3+)</name>
        <dbReference type="ChEBI" id="CHEBI:29034"/>
    </ligand>
</feature>
<feature type="binding site" evidence="1">
    <location>
        <position position="74"/>
    </location>
    <ligand>
        <name>Zn(2+)</name>
        <dbReference type="ChEBI" id="CHEBI:29105"/>
    </ligand>
</feature>
<feature type="binding site" evidence="1">
    <location>
        <position position="76"/>
    </location>
    <ligand>
        <name>Fe(3+)</name>
        <dbReference type="ChEBI" id="CHEBI:29034"/>
    </ligand>
</feature>
<feature type="binding site" evidence="1">
    <location>
        <position position="76"/>
    </location>
    <ligand>
        <name>Zn(2+)</name>
        <dbReference type="ChEBI" id="CHEBI:29105"/>
    </ligand>
</feature>
<feature type="binding site" evidence="1">
    <location>
        <position position="83"/>
    </location>
    <ligand>
        <name>4-imidazolone-5-propanoate</name>
        <dbReference type="ChEBI" id="CHEBI:77893"/>
    </ligand>
</feature>
<feature type="binding site" evidence="1">
    <location>
        <position position="146"/>
    </location>
    <ligand>
        <name>4-imidazolone-5-propanoate</name>
        <dbReference type="ChEBI" id="CHEBI:77893"/>
    </ligand>
</feature>
<feature type="binding site" evidence="1">
    <location>
        <position position="146"/>
    </location>
    <ligand>
        <name>N-formimidoyl-L-glutamate</name>
        <dbReference type="ChEBI" id="CHEBI:58928"/>
    </ligand>
</feature>
<feature type="binding site" evidence="1">
    <location>
        <position position="176"/>
    </location>
    <ligand>
        <name>4-imidazolone-5-propanoate</name>
        <dbReference type="ChEBI" id="CHEBI:77893"/>
    </ligand>
</feature>
<feature type="binding site" evidence="1">
    <location>
        <position position="238"/>
    </location>
    <ligand>
        <name>Fe(3+)</name>
        <dbReference type="ChEBI" id="CHEBI:29034"/>
    </ligand>
</feature>
<feature type="binding site" evidence="1">
    <location>
        <position position="238"/>
    </location>
    <ligand>
        <name>Zn(2+)</name>
        <dbReference type="ChEBI" id="CHEBI:29105"/>
    </ligand>
</feature>
<feature type="binding site" evidence="1">
    <location>
        <position position="241"/>
    </location>
    <ligand>
        <name>4-imidazolone-5-propanoate</name>
        <dbReference type="ChEBI" id="CHEBI:77893"/>
    </ligand>
</feature>
<feature type="binding site" evidence="1">
    <location>
        <position position="312"/>
    </location>
    <ligand>
        <name>Fe(3+)</name>
        <dbReference type="ChEBI" id="CHEBI:29034"/>
    </ligand>
</feature>
<feature type="binding site" evidence="1">
    <location>
        <position position="312"/>
    </location>
    <ligand>
        <name>Zn(2+)</name>
        <dbReference type="ChEBI" id="CHEBI:29105"/>
    </ligand>
</feature>
<feature type="binding site" evidence="1">
    <location>
        <position position="314"/>
    </location>
    <ligand>
        <name>N-formimidoyl-L-glutamate</name>
        <dbReference type="ChEBI" id="CHEBI:58928"/>
    </ligand>
</feature>
<feature type="binding site" evidence="1">
    <location>
        <position position="316"/>
    </location>
    <ligand>
        <name>N-formimidoyl-L-glutamate</name>
        <dbReference type="ChEBI" id="CHEBI:58928"/>
    </ligand>
</feature>
<feature type="binding site" evidence="1">
    <location>
        <position position="317"/>
    </location>
    <ligand>
        <name>4-imidazolone-5-propanoate</name>
        <dbReference type="ChEBI" id="CHEBI:77893"/>
    </ligand>
</feature>
<dbReference type="EC" id="3.5.2.7" evidence="1"/>
<dbReference type="EMBL" id="CP001114">
    <property type="protein sequence ID" value="ACO46482.1"/>
    <property type="molecule type" value="Genomic_DNA"/>
</dbReference>
<dbReference type="RefSeq" id="WP_012693605.1">
    <property type="nucleotide sequence ID" value="NC_012526.1"/>
</dbReference>
<dbReference type="SMR" id="C1CWB5"/>
<dbReference type="STRING" id="546414.Deide_15230"/>
<dbReference type="PaxDb" id="546414-Deide_15230"/>
<dbReference type="KEGG" id="ddr:Deide_15230"/>
<dbReference type="eggNOG" id="COG1228">
    <property type="taxonomic scope" value="Bacteria"/>
</dbReference>
<dbReference type="HOGENOM" id="CLU_041647_0_1_0"/>
<dbReference type="OrthoDB" id="9776455at2"/>
<dbReference type="UniPathway" id="UPA00379">
    <property type="reaction ID" value="UER00551"/>
</dbReference>
<dbReference type="Proteomes" id="UP000002208">
    <property type="component" value="Chromosome"/>
</dbReference>
<dbReference type="GO" id="GO:0005737">
    <property type="term" value="C:cytoplasm"/>
    <property type="evidence" value="ECO:0007669"/>
    <property type="project" value="UniProtKB-SubCell"/>
</dbReference>
<dbReference type="GO" id="GO:0050480">
    <property type="term" value="F:imidazolonepropionase activity"/>
    <property type="evidence" value="ECO:0007669"/>
    <property type="project" value="UniProtKB-UniRule"/>
</dbReference>
<dbReference type="GO" id="GO:0005506">
    <property type="term" value="F:iron ion binding"/>
    <property type="evidence" value="ECO:0007669"/>
    <property type="project" value="UniProtKB-UniRule"/>
</dbReference>
<dbReference type="GO" id="GO:0008270">
    <property type="term" value="F:zinc ion binding"/>
    <property type="evidence" value="ECO:0007669"/>
    <property type="project" value="UniProtKB-UniRule"/>
</dbReference>
<dbReference type="GO" id="GO:0019556">
    <property type="term" value="P:L-histidine catabolic process to glutamate and formamide"/>
    <property type="evidence" value="ECO:0007669"/>
    <property type="project" value="UniProtKB-UniPathway"/>
</dbReference>
<dbReference type="GO" id="GO:0019557">
    <property type="term" value="P:L-histidine catabolic process to glutamate and formate"/>
    <property type="evidence" value="ECO:0007669"/>
    <property type="project" value="UniProtKB-UniPathway"/>
</dbReference>
<dbReference type="FunFam" id="3.20.20.140:FF:000007">
    <property type="entry name" value="Imidazolonepropionase"/>
    <property type="match status" value="1"/>
</dbReference>
<dbReference type="Gene3D" id="3.20.20.140">
    <property type="entry name" value="Metal-dependent hydrolases"/>
    <property type="match status" value="1"/>
</dbReference>
<dbReference type="Gene3D" id="2.30.40.10">
    <property type="entry name" value="Urease, subunit C, domain 1"/>
    <property type="match status" value="1"/>
</dbReference>
<dbReference type="HAMAP" id="MF_00372">
    <property type="entry name" value="HutI"/>
    <property type="match status" value="1"/>
</dbReference>
<dbReference type="InterPro" id="IPR006680">
    <property type="entry name" value="Amidohydro-rel"/>
</dbReference>
<dbReference type="InterPro" id="IPR005920">
    <property type="entry name" value="HutI"/>
</dbReference>
<dbReference type="InterPro" id="IPR011059">
    <property type="entry name" value="Metal-dep_hydrolase_composite"/>
</dbReference>
<dbReference type="InterPro" id="IPR032466">
    <property type="entry name" value="Metal_Hydrolase"/>
</dbReference>
<dbReference type="NCBIfam" id="TIGR01224">
    <property type="entry name" value="hutI"/>
    <property type="match status" value="1"/>
</dbReference>
<dbReference type="PANTHER" id="PTHR42752">
    <property type="entry name" value="IMIDAZOLONEPROPIONASE"/>
    <property type="match status" value="1"/>
</dbReference>
<dbReference type="PANTHER" id="PTHR42752:SF1">
    <property type="entry name" value="IMIDAZOLONEPROPIONASE-RELATED"/>
    <property type="match status" value="1"/>
</dbReference>
<dbReference type="Pfam" id="PF01979">
    <property type="entry name" value="Amidohydro_1"/>
    <property type="match status" value="1"/>
</dbReference>
<dbReference type="SUPFAM" id="SSF51338">
    <property type="entry name" value="Composite domain of metallo-dependent hydrolases"/>
    <property type="match status" value="1"/>
</dbReference>
<dbReference type="SUPFAM" id="SSF51556">
    <property type="entry name" value="Metallo-dependent hydrolases"/>
    <property type="match status" value="1"/>
</dbReference>
<comment type="function">
    <text evidence="1">Catalyzes the hydrolytic cleavage of the carbon-nitrogen bond in imidazolone-5-propanoate to yield N-formimidoyl-L-glutamate. It is the third step in the universal histidine degradation pathway.</text>
</comment>
<comment type="catalytic activity">
    <reaction evidence="1">
        <text>4-imidazolone-5-propanoate + H2O = N-formimidoyl-L-glutamate</text>
        <dbReference type="Rhea" id="RHEA:23660"/>
        <dbReference type="ChEBI" id="CHEBI:15377"/>
        <dbReference type="ChEBI" id="CHEBI:58928"/>
        <dbReference type="ChEBI" id="CHEBI:77893"/>
        <dbReference type="EC" id="3.5.2.7"/>
    </reaction>
</comment>
<comment type="cofactor">
    <cofactor evidence="1">
        <name>Zn(2+)</name>
        <dbReference type="ChEBI" id="CHEBI:29105"/>
    </cofactor>
    <cofactor evidence="1">
        <name>Fe(3+)</name>
        <dbReference type="ChEBI" id="CHEBI:29034"/>
    </cofactor>
    <text evidence="1">Binds 1 zinc or iron ion per subunit.</text>
</comment>
<comment type="pathway">
    <text evidence="1">Amino-acid degradation; L-histidine degradation into L-glutamate; N-formimidoyl-L-glutamate from L-histidine: step 3/3.</text>
</comment>
<comment type="subcellular location">
    <subcellularLocation>
        <location evidence="1">Cytoplasm</location>
    </subcellularLocation>
</comment>
<comment type="similarity">
    <text evidence="1">Belongs to the metallo-dependent hydrolases superfamily. HutI family.</text>
</comment>
<evidence type="ECO:0000255" key="1">
    <source>
        <dbReference type="HAMAP-Rule" id="MF_00372"/>
    </source>
</evidence>